<name>ISPG_BARBK</name>
<keyword id="KW-0004">4Fe-4S</keyword>
<keyword id="KW-0408">Iron</keyword>
<keyword id="KW-0411">Iron-sulfur</keyword>
<keyword id="KW-0414">Isoprene biosynthesis</keyword>
<keyword id="KW-0479">Metal-binding</keyword>
<keyword id="KW-0560">Oxidoreductase</keyword>
<comment type="function">
    <text evidence="1">Converts 2C-methyl-D-erythritol 2,4-cyclodiphosphate (ME-2,4cPP) into 1-hydroxy-2-methyl-2-(E)-butenyl 4-diphosphate.</text>
</comment>
<comment type="catalytic activity">
    <reaction evidence="1">
        <text>(2E)-4-hydroxy-3-methylbut-2-enyl diphosphate + oxidized [flavodoxin] + H2O + 2 H(+) = 2-C-methyl-D-erythritol 2,4-cyclic diphosphate + reduced [flavodoxin]</text>
        <dbReference type="Rhea" id="RHEA:43604"/>
        <dbReference type="Rhea" id="RHEA-COMP:10622"/>
        <dbReference type="Rhea" id="RHEA-COMP:10623"/>
        <dbReference type="ChEBI" id="CHEBI:15377"/>
        <dbReference type="ChEBI" id="CHEBI:15378"/>
        <dbReference type="ChEBI" id="CHEBI:57618"/>
        <dbReference type="ChEBI" id="CHEBI:58210"/>
        <dbReference type="ChEBI" id="CHEBI:58483"/>
        <dbReference type="ChEBI" id="CHEBI:128753"/>
        <dbReference type="EC" id="1.17.7.3"/>
    </reaction>
</comment>
<comment type="cofactor">
    <cofactor evidence="1">
        <name>[4Fe-4S] cluster</name>
        <dbReference type="ChEBI" id="CHEBI:49883"/>
    </cofactor>
    <text evidence="1">Binds 1 [4Fe-4S] cluster.</text>
</comment>
<comment type="pathway">
    <text evidence="1">Isoprenoid biosynthesis; isopentenyl diphosphate biosynthesis via DXP pathway; isopentenyl diphosphate from 1-deoxy-D-xylulose 5-phosphate: step 5/6.</text>
</comment>
<comment type="similarity">
    <text evidence="1">Belongs to the IspG family.</text>
</comment>
<sequence length="418" mass="45481">MSTAYYLSKLSERRRSVAVMVGDVGVGGDHPIVVQSMTNTDTADIDATVMQVSALWRAGSQLVRITVDRDEAAAAVPKIRERLERLGIFVPLVGDFHYIGHKLLVQHPACAQALAKYRINPGNVGFGAKKDLQFSQIIEIACQYNKPIRIGVNWGSLDEALLTQLMDENAQQEKPLSMAEVMREAVIQSALHSAFAAEKMGLGRDKIILSAKVSDVQDLIAVYTLLAKRSDHALHVGLTEAGMGTKGVVASSAALGILLQQGIGDTIRISLTPEPGGDRTREVKVCQELLQVMGFRQFVPVVAACPGCGRTTSTVFQTLAQKIEANLCKNMPIWREKYPGIERLKVAVMGCIVNGPGESKHADIGISLPGTGELPAAPVFIEGKKVKVLRGHHIAEEFEEILSDYIRTRFGQHEQKRA</sequence>
<protein>
    <recommendedName>
        <fullName evidence="1">4-hydroxy-3-methylbut-2-en-1-yl diphosphate synthase (flavodoxin)</fullName>
        <ecNumber evidence="1">1.17.7.3</ecNumber>
    </recommendedName>
    <alternativeName>
        <fullName evidence="1">1-hydroxy-2-methyl-2-(E)-butenyl 4-diphosphate synthase</fullName>
    </alternativeName>
</protein>
<organism>
    <name type="scientific">Bartonella bacilliformis (strain ATCC 35685 / KC583 / Herrer 020/F12,63)</name>
    <dbReference type="NCBI Taxonomy" id="360095"/>
    <lineage>
        <taxon>Bacteria</taxon>
        <taxon>Pseudomonadati</taxon>
        <taxon>Pseudomonadota</taxon>
        <taxon>Alphaproteobacteria</taxon>
        <taxon>Hyphomicrobiales</taxon>
        <taxon>Bartonellaceae</taxon>
        <taxon>Bartonella</taxon>
    </lineage>
</organism>
<accession>A1UR54</accession>
<feature type="chain" id="PRO_1000011440" description="4-hydroxy-3-methylbut-2-en-1-yl diphosphate synthase (flavodoxin)">
    <location>
        <begin position="1"/>
        <end position="418"/>
    </location>
</feature>
<feature type="binding site" evidence="1">
    <location>
        <position position="305"/>
    </location>
    <ligand>
        <name>[4Fe-4S] cluster</name>
        <dbReference type="ChEBI" id="CHEBI:49883"/>
    </ligand>
</feature>
<feature type="binding site" evidence="1">
    <location>
        <position position="308"/>
    </location>
    <ligand>
        <name>[4Fe-4S] cluster</name>
        <dbReference type="ChEBI" id="CHEBI:49883"/>
    </ligand>
</feature>
<feature type="binding site" evidence="1">
    <location>
        <position position="351"/>
    </location>
    <ligand>
        <name>[4Fe-4S] cluster</name>
        <dbReference type="ChEBI" id="CHEBI:49883"/>
    </ligand>
</feature>
<feature type="binding site" evidence="1">
    <location>
        <position position="358"/>
    </location>
    <ligand>
        <name>[4Fe-4S] cluster</name>
        <dbReference type="ChEBI" id="CHEBI:49883"/>
    </ligand>
</feature>
<gene>
    <name evidence="1" type="primary">ispG</name>
    <name type="ordered locus">BARBAKC583_0119</name>
</gene>
<proteinExistence type="inferred from homology"/>
<evidence type="ECO:0000255" key="1">
    <source>
        <dbReference type="HAMAP-Rule" id="MF_00159"/>
    </source>
</evidence>
<dbReference type="EC" id="1.17.7.3" evidence="1"/>
<dbReference type="EMBL" id="CP000524">
    <property type="protein sequence ID" value="ABM44797.1"/>
    <property type="molecule type" value="Genomic_DNA"/>
</dbReference>
<dbReference type="RefSeq" id="WP_005765881.1">
    <property type="nucleotide sequence ID" value="NC_008783.1"/>
</dbReference>
<dbReference type="SMR" id="A1UR54"/>
<dbReference type="STRING" id="360095.BARBAKC583_0119"/>
<dbReference type="GeneID" id="4683818"/>
<dbReference type="KEGG" id="bbk:BARBAKC583_0119"/>
<dbReference type="PATRIC" id="fig|360095.6.peg.117"/>
<dbReference type="eggNOG" id="COG0821">
    <property type="taxonomic scope" value="Bacteria"/>
</dbReference>
<dbReference type="HOGENOM" id="CLU_042258_1_0_5"/>
<dbReference type="OrthoDB" id="9803214at2"/>
<dbReference type="UniPathway" id="UPA00056">
    <property type="reaction ID" value="UER00096"/>
</dbReference>
<dbReference type="Proteomes" id="UP000000643">
    <property type="component" value="Chromosome"/>
</dbReference>
<dbReference type="GO" id="GO:0051539">
    <property type="term" value="F:4 iron, 4 sulfur cluster binding"/>
    <property type="evidence" value="ECO:0007669"/>
    <property type="project" value="UniProtKB-UniRule"/>
</dbReference>
<dbReference type="GO" id="GO:0046429">
    <property type="term" value="F:4-hydroxy-3-methylbut-2-en-1-yl diphosphate synthase activity (ferredoxin)"/>
    <property type="evidence" value="ECO:0007669"/>
    <property type="project" value="UniProtKB-UniRule"/>
</dbReference>
<dbReference type="GO" id="GO:0141197">
    <property type="term" value="F:4-hydroxy-3-methylbut-2-enyl-diphosphate synthase activity (flavodoxin)"/>
    <property type="evidence" value="ECO:0007669"/>
    <property type="project" value="UniProtKB-EC"/>
</dbReference>
<dbReference type="GO" id="GO:0005506">
    <property type="term" value="F:iron ion binding"/>
    <property type="evidence" value="ECO:0007669"/>
    <property type="project" value="InterPro"/>
</dbReference>
<dbReference type="GO" id="GO:0019288">
    <property type="term" value="P:isopentenyl diphosphate biosynthetic process, methylerythritol 4-phosphate pathway"/>
    <property type="evidence" value="ECO:0007669"/>
    <property type="project" value="UniProtKB-UniRule"/>
</dbReference>
<dbReference type="GO" id="GO:0016114">
    <property type="term" value="P:terpenoid biosynthetic process"/>
    <property type="evidence" value="ECO:0007669"/>
    <property type="project" value="InterPro"/>
</dbReference>
<dbReference type="FunFam" id="3.30.413.10:FF:000012">
    <property type="entry name" value="4-hydroxy-3-methylbut-2-en-1-yl diphosphate synthase (flavodoxin)"/>
    <property type="match status" value="1"/>
</dbReference>
<dbReference type="Gene3D" id="3.20.20.20">
    <property type="entry name" value="Dihydropteroate synthase-like"/>
    <property type="match status" value="1"/>
</dbReference>
<dbReference type="Gene3D" id="3.30.413.10">
    <property type="entry name" value="Sulfite Reductase Hemoprotein, domain 1"/>
    <property type="match status" value="1"/>
</dbReference>
<dbReference type="HAMAP" id="MF_00159">
    <property type="entry name" value="IspG"/>
    <property type="match status" value="1"/>
</dbReference>
<dbReference type="InterPro" id="IPR011005">
    <property type="entry name" value="Dihydropteroate_synth-like_sf"/>
</dbReference>
<dbReference type="InterPro" id="IPR016425">
    <property type="entry name" value="IspG_bac"/>
</dbReference>
<dbReference type="InterPro" id="IPR004588">
    <property type="entry name" value="IspG_bac-typ"/>
</dbReference>
<dbReference type="InterPro" id="IPR045854">
    <property type="entry name" value="NO2/SO3_Rdtase_4Fe4S_sf"/>
</dbReference>
<dbReference type="NCBIfam" id="TIGR00612">
    <property type="entry name" value="ispG_gcpE"/>
    <property type="match status" value="1"/>
</dbReference>
<dbReference type="NCBIfam" id="NF001540">
    <property type="entry name" value="PRK00366.1"/>
    <property type="match status" value="1"/>
</dbReference>
<dbReference type="PANTHER" id="PTHR30454">
    <property type="entry name" value="4-HYDROXY-3-METHYLBUT-2-EN-1-YL DIPHOSPHATE SYNTHASE"/>
    <property type="match status" value="1"/>
</dbReference>
<dbReference type="PANTHER" id="PTHR30454:SF0">
    <property type="entry name" value="4-HYDROXY-3-METHYLBUT-2-EN-1-YL DIPHOSPHATE SYNTHASE (FERREDOXIN), CHLOROPLASTIC"/>
    <property type="match status" value="1"/>
</dbReference>
<dbReference type="Pfam" id="PF04551">
    <property type="entry name" value="GcpE"/>
    <property type="match status" value="1"/>
</dbReference>
<dbReference type="PIRSF" id="PIRSF004640">
    <property type="entry name" value="IspG"/>
    <property type="match status" value="1"/>
</dbReference>
<dbReference type="SUPFAM" id="SSF56014">
    <property type="entry name" value="Nitrite and sulphite reductase 4Fe-4S domain-like"/>
    <property type="match status" value="1"/>
</dbReference>
<reference key="1">
    <citation type="submission" date="2006-12" db="EMBL/GenBank/DDBJ databases">
        <authorList>
            <person name="Hendrix L."/>
            <person name="Mohamoud Y."/>
            <person name="Radune D."/>
            <person name="Shvartsbeyn A."/>
            <person name="Daugherty S."/>
            <person name="Dodson R."/>
            <person name="Durkin A.S."/>
            <person name="Harkins D."/>
            <person name="Huot H."/>
            <person name="Kothari S.P."/>
            <person name="Madupu R."/>
            <person name="Li J."/>
            <person name="Nelson W.C."/>
            <person name="Shrivastava S."/>
            <person name="Giglio M.G."/>
            <person name="Haft D."/>
            <person name="Selengut J."/>
            <person name="Fraser-Ligget C."/>
            <person name="Seshadri R."/>
        </authorList>
    </citation>
    <scope>NUCLEOTIDE SEQUENCE [LARGE SCALE GENOMIC DNA]</scope>
    <source>
        <strain>ATCC 35685 / KC583 / Herrer 020/F12,63</strain>
    </source>
</reference>